<dbReference type="EMBL" id="CP000237">
    <property type="protein sequence ID" value="ABD46462.1"/>
    <property type="molecule type" value="Genomic_DNA"/>
</dbReference>
<dbReference type="RefSeq" id="WP_011451666.1">
    <property type="nucleotide sequence ID" value="NC_007798.1"/>
</dbReference>
<dbReference type="SMR" id="Q2GED6"/>
<dbReference type="STRING" id="222891.NSE_0269"/>
<dbReference type="KEGG" id="nse:NSE_0269"/>
<dbReference type="eggNOG" id="COG0090">
    <property type="taxonomic scope" value="Bacteria"/>
</dbReference>
<dbReference type="HOGENOM" id="CLU_036235_2_1_5"/>
<dbReference type="OrthoDB" id="9778722at2"/>
<dbReference type="Proteomes" id="UP000001942">
    <property type="component" value="Chromosome"/>
</dbReference>
<dbReference type="GO" id="GO:0015934">
    <property type="term" value="C:large ribosomal subunit"/>
    <property type="evidence" value="ECO:0007669"/>
    <property type="project" value="InterPro"/>
</dbReference>
<dbReference type="GO" id="GO:0019843">
    <property type="term" value="F:rRNA binding"/>
    <property type="evidence" value="ECO:0007669"/>
    <property type="project" value="UniProtKB-UniRule"/>
</dbReference>
<dbReference type="GO" id="GO:0003735">
    <property type="term" value="F:structural constituent of ribosome"/>
    <property type="evidence" value="ECO:0007669"/>
    <property type="project" value="InterPro"/>
</dbReference>
<dbReference type="GO" id="GO:0016740">
    <property type="term" value="F:transferase activity"/>
    <property type="evidence" value="ECO:0007669"/>
    <property type="project" value="InterPro"/>
</dbReference>
<dbReference type="GO" id="GO:0002181">
    <property type="term" value="P:cytoplasmic translation"/>
    <property type="evidence" value="ECO:0007669"/>
    <property type="project" value="TreeGrafter"/>
</dbReference>
<dbReference type="FunFam" id="2.30.30.30:FF:000001">
    <property type="entry name" value="50S ribosomal protein L2"/>
    <property type="match status" value="1"/>
</dbReference>
<dbReference type="FunFam" id="4.10.950.10:FF:000001">
    <property type="entry name" value="50S ribosomal protein L2"/>
    <property type="match status" value="1"/>
</dbReference>
<dbReference type="Gene3D" id="2.30.30.30">
    <property type="match status" value="1"/>
</dbReference>
<dbReference type="Gene3D" id="2.40.50.140">
    <property type="entry name" value="Nucleic acid-binding proteins"/>
    <property type="match status" value="1"/>
</dbReference>
<dbReference type="Gene3D" id="4.10.950.10">
    <property type="entry name" value="Ribosomal protein L2, domain 3"/>
    <property type="match status" value="1"/>
</dbReference>
<dbReference type="HAMAP" id="MF_01320_B">
    <property type="entry name" value="Ribosomal_uL2_B"/>
    <property type="match status" value="1"/>
</dbReference>
<dbReference type="InterPro" id="IPR012340">
    <property type="entry name" value="NA-bd_OB-fold"/>
</dbReference>
<dbReference type="InterPro" id="IPR014722">
    <property type="entry name" value="Rib_uL2_dom2"/>
</dbReference>
<dbReference type="InterPro" id="IPR002171">
    <property type="entry name" value="Ribosomal_uL2"/>
</dbReference>
<dbReference type="InterPro" id="IPR005880">
    <property type="entry name" value="Ribosomal_uL2_bac/org-type"/>
</dbReference>
<dbReference type="InterPro" id="IPR022669">
    <property type="entry name" value="Ribosomal_uL2_C"/>
</dbReference>
<dbReference type="InterPro" id="IPR022671">
    <property type="entry name" value="Ribosomal_uL2_CS"/>
</dbReference>
<dbReference type="InterPro" id="IPR014726">
    <property type="entry name" value="Ribosomal_uL2_dom3"/>
</dbReference>
<dbReference type="InterPro" id="IPR022666">
    <property type="entry name" value="Ribosomal_uL2_RNA-bd_dom"/>
</dbReference>
<dbReference type="InterPro" id="IPR008991">
    <property type="entry name" value="Translation_prot_SH3-like_sf"/>
</dbReference>
<dbReference type="NCBIfam" id="TIGR01171">
    <property type="entry name" value="rplB_bact"/>
    <property type="match status" value="1"/>
</dbReference>
<dbReference type="PANTHER" id="PTHR13691:SF5">
    <property type="entry name" value="LARGE RIBOSOMAL SUBUNIT PROTEIN UL2M"/>
    <property type="match status" value="1"/>
</dbReference>
<dbReference type="PANTHER" id="PTHR13691">
    <property type="entry name" value="RIBOSOMAL PROTEIN L2"/>
    <property type="match status" value="1"/>
</dbReference>
<dbReference type="Pfam" id="PF00181">
    <property type="entry name" value="Ribosomal_L2"/>
    <property type="match status" value="1"/>
</dbReference>
<dbReference type="Pfam" id="PF03947">
    <property type="entry name" value="Ribosomal_L2_C"/>
    <property type="match status" value="1"/>
</dbReference>
<dbReference type="PIRSF" id="PIRSF002158">
    <property type="entry name" value="Ribosomal_L2"/>
    <property type="match status" value="1"/>
</dbReference>
<dbReference type="SMART" id="SM01383">
    <property type="entry name" value="Ribosomal_L2"/>
    <property type="match status" value="1"/>
</dbReference>
<dbReference type="SMART" id="SM01382">
    <property type="entry name" value="Ribosomal_L2_C"/>
    <property type="match status" value="1"/>
</dbReference>
<dbReference type="SUPFAM" id="SSF50249">
    <property type="entry name" value="Nucleic acid-binding proteins"/>
    <property type="match status" value="1"/>
</dbReference>
<dbReference type="SUPFAM" id="SSF50104">
    <property type="entry name" value="Translation proteins SH3-like domain"/>
    <property type="match status" value="1"/>
</dbReference>
<dbReference type="PROSITE" id="PS00467">
    <property type="entry name" value="RIBOSOMAL_L2"/>
    <property type="match status" value="1"/>
</dbReference>
<feature type="chain" id="PRO_0000309967" description="Large ribosomal subunit protein uL2">
    <location>
        <begin position="1"/>
        <end position="279"/>
    </location>
</feature>
<feature type="region of interest" description="Disordered" evidence="2">
    <location>
        <begin position="227"/>
        <end position="279"/>
    </location>
</feature>
<keyword id="KW-0687">Ribonucleoprotein</keyword>
<keyword id="KW-0689">Ribosomal protein</keyword>
<keyword id="KW-0694">RNA-binding</keyword>
<keyword id="KW-0699">rRNA-binding</keyword>
<sequence>MPVKNLKPFNASSRGAVLVDYSELWRGSPEKKLLLPKKSCSGRNNAGRITVRHRGGRGKVRYRLISFSRFSSGAPLFTKAVVERIEYDPNRTAFIALVRDFKTGLPSYIIAPEGLKKSDVLSTDVFDDMAPGACMPLGKVPLGTTVHNVELKPGAGGQLVRSAGSSARVIARDGNYTLVTLPSGEKRLILSTCHATIGAVSNADRKNTKLGKAGRSRWLGRRPSVRGVAMNPVDHPMGGGEGKTSGGRHPVSPWGFPTKGKKTRDPNKLSSKFIKSKKR</sequence>
<accession>Q2GED6</accession>
<organism>
    <name type="scientific">Neorickettsia sennetsu (strain ATCC VR-367 / Miyayama)</name>
    <name type="common">Ehrlichia sennetsu</name>
    <dbReference type="NCBI Taxonomy" id="222891"/>
    <lineage>
        <taxon>Bacteria</taxon>
        <taxon>Pseudomonadati</taxon>
        <taxon>Pseudomonadota</taxon>
        <taxon>Alphaproteobacteria</taxon>
        <taxon>Rickettsiales</taxon>
        <taxon>Anaplasmataceae</taxon>
        <taxon>Neorickettsia</taxon>
    </lineage>
</organism>
<name>RL2_NEOSM</name>
<protein>
    <recommendedName>
        <fullName evidence="1">Large ribosomal subunit protein uL2</fullName>
    </recommendedName>
    <alternativeName>
        <fullName evidence="3">50S ribosomal protein L2</fullName>
    </alternativeName>
</protein>
<comment type="function">
    <text evidence="1">One of the primary rRNA binding proteins. Required for association of the 30S and 50S subunits to form the 70S ribosome, for tRNA binding and peptide bond formation. It has been suggested to have peptidyltransferase activity; this is somewhat controversial. Makes several contacts with the 16S rRNA in the 70S ribosome.</text>
</comment>
<comment type="subunit">
    <text evidence="1">Part of the 50S ribosomal subunit. Forms a bridge to the 30S subunit in the 70S ribosome.</text>
</comment>
<comment type="similarity">
    <text evidence="1">Belongs to the universal ribosomal protein uL2 family.</text>
</comment>
<proteinExistence type="inferred from homology"/>
<reference key="1">
    <citation type="journal article" date="2006" name="PLoS Genet.">
        <title>Comparative genomics of emerging human ehrlichiosis agents.</title>
        <authorList>
            <person name="Dunning Hotopp J.C."/>
            <person name="Lin M."/>
            <person name="Madupu R."/>
            <person name="Crabtree J."/>
            <person name="Angiuoli S.V."/>
            <person name="Eisen J.A."/>
            <person name="Seshadri R."/>
            <person name="Ren Q."/>
            <person name="Wu M."/>
            <person name="Utterback T.R."/>
            <person name="Smith S."/>
            <person name="Lewis M."/>
            <person name="Khouri H."/>
            <person name="Zhang C."/>
            <person name="Niu H."/>
            <person name="Lin Q."/>
            <person name="Ohashi N."/>
            <person name="Zhi N."/>
            <person name="Nelson W.C."/>
            <person name="Brinkac L.M."/>
            <person name="Dodson R.J."/>
            <person name="Rosovitz M.J."/>
            <person name="Sundaram J.P."/>
            <person name="Daugherty S.C."/>
            <person name="Davidsen T."/>
            <person name="Durkin A.S."/>
            <person name="Gwinn M.L."/>
            <person name="Haft D.H."/>
            <person name="Selengut J.D."/>
            <person name="Sullivan S.A."/>
            <person name="Zafar N."/>
            <person name="Zhou L."/>
            <person name="Benahmed F."/>
            <person name="Forberger H."/>
            <person name="Halpin R."/>
            <person name="Mulligan S."/>
            <person name="Robinson J."/>
            <person name="White O."/>
            <person name="Rikihisa Y."/>
            <person name="Tettelin H."/>
        </authorList>
    </citation>
    <scope>NUCLEOTIDE SEQUENCE [LARGE SCALE GENOMIC DNA]</scope>
    <source>
        <strain>ATCC VR-367 / Miyayama</strain>
    </source>
</reference>
<evidence type="ECO:0000255" key="1">
    <source>
        <dbReference type="HAMAP-Rule" id="MF_01320"/>
    </source>
</evidence>
<evidence type="ECO:0000256" key="2">
    <source>
        <dbReference type="SAM" id="MobiDB-lite"/>
    </source>
</evidence>
<evidence type="ECO:0000305" key="3"/>
<gene>
    <name evidence="1" type="primary">rplB</name>
    <name type="ordered locus">NSE_0269</name>
</gene>